<dbReference type="EMBL" id="AC007017">
    <property type="protein sequence ID" value="AAD21469.2"/>
    <property type="molecule type" value="Genomic_DNA"/>
</dbReference>
<dbReference type="EMBL" id="CP002685">
    <property type="protein sequence ID" value="AEC09173.1"/>
    <property type="molecule type" value="Genomic_DNA"/>
</dbReference>
<dbReference type="EMBL" id="CP002685">
    <property type="protein sequence ID" value="ANM63304.1"/>
    <property type="molecule type" value="Genomic_DNA"/>
</dbReference>
<dbReference type="EMBL" id="CP002685">
    <property type="protein sequence ID" value="ANM63305.1"/>
    <property type="molecule type" value="Genomic_DNA"/>
</dbReference>
<dbReference type="EMBL" id="AY057620">
    <property type="protein sequence ID" value="AAL14415.1"/>
    <property type="molecule type" value="mRNA"/>
</dbReference>
<dbReference type="EMBL" id="AY140090">
    <property type="protein sequence ID" value="AAM98231.1"/>
    <property type="molecule type" value="mRNA"/>
</dbReference>
<dbReference type="PIR" id="B84774">
    <property type="entry name" value="B84774"/>
</dbReference>
<dbReference type="RefSeq" id="NP_001325399.1">
    <property type="nucleotide sequence ID" value="NM_001336577.1"/>
</dbReference>
<dbReference type="RefSeq" id="NP_001325400.1">
    <property type="nucleotide sequence ID" value="NM_001336576.1"/>
</dbReference>
<dbReference type="RefSeq" id="NP_565829.1">
    <property type="nucleotide sequence ID" value="NM_129147.4"/>
</dbReference>
<dbReference type="SMR" id="Q9SJ62"/>
<dbReference type="FunCoup" id="Q9SJ62">
    <property type="interactions" value="667"/>
</dbReference>
<dbReference type="IntAct" id="Q9SJ62">
    <property type="interactions" value="5"/>
</dbReference>
<dbReference type="STRING" id="3702.Q9SJ62"/>
<dbReference type="GlyGen" id="Q9SJ62">
    <property type="glycosylation" value="1 site"/>
</dbReference>
<dbReference type="iPTMnet" id="Q9SJ62"/>
<dbReference type="PaxDb" id="3702-AT2G35880.1"/>
<dbReference type="ProteomicsDB" id="242545"/>
<dbReference type="EnsemblPlants" id="AT2G35880.1">
    <property type="protein sequence ID" value="AT2G35880.1"/>
    <property type="gene ID" value="AT2G35880"/>
</dbReference>
<dbReference type="EnsemblPlants" id="AT2G35880.2">
    <property type="protein sequence ID" value="AT2G35880.2"/>
    <property type="gene ID" value="AT2G35880"/>
</dbReference>
<dbReference type="EnsemblPlants" id="AT2G35880.3">
    <property type="protein sequence ID" value="AT2G35880.3"/>
    <property type="gene ID" value="AT2G35880"/>
</dbReference>
<dbReference type="GeneID" id="818161"/>
<dbReference type="Gramene" id="AT2G35880.1">
    <property type="protein sequence ID" value="AT2G35880.1"/>
    <property type="gene ID" value="AT2G35880"/>
</dbReference>
<dbReference type="Gramene" id="AT2G35880.2">
    <property type="protein sequence ID" value="AT2G35880.2"/>
    <property type="gene ID" value="AT2G35880"/>
</dbReference>
<dbReference type="Gramene" id="AT2G35880.3">
    <property type="protein sequence ID" value="AT2G35880.3"/>
    <property type="gene ID" value="AT2G35880"/>
</dbReference>
<dbReference type="KEGG" id="ath:AT2G35880"/>
<dbReference type="Araport" id="AT2G35880"/>
<dbReference type="TAIR" id="AT2G35880"/>
<dbReference type="eggNOG" id="ENOG502QTFB">
    <property type="taxonomic scope" value="Eukaryota"/>
</dbReference>
<dbReference type="HOGENOM" id="CLU_040103_0_0_1"/>
<dbReference type="InParanoid" id="Q9SJ62"/>
<dbReference type="OMA" id="TKGAYTD"/>
<dbReference type="PhylomeDB" id="Q9SJ62"/>
<dbReference type="CD-CODE" id="4299E36E">
    <property type="entry name" value="Nucleolus"/>
</dbReference>
<dbReference type="PRO" id="PR:Q9SJ62"/>
<dbReference type="Proteomes" id="UP000006548">
    <property type="component" value="Chromosome 2"/>
</dbReference>
<dbReference type="ExpressionAtlas" id="Q9SJ62">
    <property type="expression patterns" value="baseline and differential"/>
</dbReference>
<dbReference type="GO" id="GO:0005783">
    <property type="term" value="C:endoplasmic reticulum"/>
    <property type="evidence" value="ECO:0007005"/>
    <property type="project" value="TAIR"/>
</dbReference>
<dbReference type="GO" id="GO:0005874">
    <property type="term" value="C:microtubule"/>
    <property type="evidence" value="ECO:0007669"/>
    <property type="project" value="UniProtKB-KW"/>
</dbReference>
<dbReference type="GO" id="GO:0008017">
    <property type="term" value="F:microtubule binding"/>
    <property type="evidence" value="ECO:0000314"/>
    <property type="project" value="TAIR"/>
</dbReference>
<dbReference type="GO" id="GO:0000226">
    <property type="term" value="P:microtubule cytoskeleton organization"/>
    <property type="evidence" value="ECO:0007669"/>
    <property type="project" value="InterPro"/>
</dbReference>
<dbReference type="GO" id="GO:0072657">
    <property type="term" value="P:protein localization to membrane"/>
    <property type="evidence" value="ECO:0000315"/>
    <property type="project" value="TAIR"/>
</dbReference>
<dbReference type="InterPro" id="IPR027329">
    <property type="entry name" value="TPX2_C"/>
</dbReference>
<dbReference type="InterPro" id="IPR044806">
    <property type="entry name" value="WVD2/WDL1-4"/>
</dbReference>
<dbReference type="PANTHER" id="PTHR46372:SF26">
    <property type="entry name" value="(WILD MALAYSIAN BANANA) HYPOTHETICAL PROTEIN"/>
    <property type="match status" value="1"/>
</dbReference>
<dbReference type="PANTHER" id="PTHR46372">
    <property type="entry name" value="PROTEIN WVD2-LIKE 3"/>
    <property type="match status" value="1"/>
</dbReference>
<dbReference type="Pfam" id="PF06886">
    <property type="entry name" value="TPX2"/>
    <property type="match status" value="1"/>
</dbReference>
<organism>
    <name type="scientific">Arabidopsis thaliana</name>
    <name type="common">Mouse-ear cress</name>
    <dbReference type="NCBI Taxonomy" id="3702"/>
    <lineage>
        <taxon>Eukaryota</taxon>
        <taxon>Viridiplantae</taxon>
        <taxon>Streptophyta</taxon>
        <taxon>Embryophyta</taxon>
        <taxon>Tracheophyta</taxon>
        <taxon>Spermatophyta</taxon>
        <taxon>Magnoliopsida</taxon>
        <taxon>eudicotyledons</taxon>
        <taxon>Gunneridae</taxon>
        <taxon>Pentapetalae</taxon>
        <taxon>rosids</taxon>
        <taxon>malvids</taxon>
        <taxon>Brassicales</taxon>
        <taxon>Brassicaceae</taxon>
        <taxon>Camelineae</taxon>
        <taxon>Arabidopsis</taxon>
    </lineage>
</organism>
<feature type="initiator methionine" description="Removed" evidence="7">
    <location>
        <position position="1"/>
    </location>
</feature>
<feature type="chain" id="PRO_0000435676" description="Protein WVD2-like 4">
    <location>
        <begin position="2"/>
        <end position="432"/>
    </location>
</feature>
<feature type="region of interest" description="Disordered" evidence="2">
    <location>
        <begin position="1"/>
        <end position="251"/>
    </location>
</feature>
<feature type="region of interest" description="Disordered" evidence="2">
    <location>
        <begin position="270"/>
        <end position="416"/>
    </location>
</feature>
<feature type="compositionally biased region" description="Basic and acidic residues" evidence="2">
    <location>
        <begin position="11"/>
        <end position="60"/>
    </location>
</feature>
<feature type="compositionally biased region" description="Low complexity" evidence="2">
    <location>
        <begin position="86"/>
        <end position="100"/>
    </location>
</feature>
<feature type="compositionally biased region" description="Polar residues" evidence="2">
    <location>
        <begin position="135"/>
        <end position="150"/>
    </location>
</feature>
<feature type="compositionally biased region" description="Basic and acidic residues" evidence="2">
    <location>
        <begin position="176"/>
        <end position="194"/>
    </location>
</feature>
<feature type="compositionally biased region" description="Basic and acidic residues" evidence="2">
    <location>
        <begin position="215"/>
        <end position="224"/>
    </location>
</feature>
<feature type="compositionally biased region" description="Low complexity" evidence="2">
    <location>
        <begin position="225"/>
        <end position="248"/>
    </location>
</feature>
<feature type="compositionally biased region" description="Basic and acidic residues" evidence="2">
    <location>
        <begin position="270"/>
        <end position="291"/>
    </location>
</feature>
<feature type="compositionally biased region" description="Polar residues" evidence="2">
    <location>
        <begin position="354"/>
        <end position="370"/>
    </location>
</feature>
<feature type="compositionally biased region" description="Basic and acidic residues" evidence="2">
    <location>
        <begin position="387"/>
        <end position="411"/>
    </location>
</feature>
<feature type="modified residue" description="N-acetylalanine" evidence="7">
    <location>
        <position position="2"/>
    </location>
</feature>
<protein>
    <recommendedName>
        <fullName evidence="5">Protein WVD2-like 4</fullName>
    </recommendedName>
</protein>
<reference key="1">
    <citation type="journal article" date="1999" name="Nature">
        <title>Sequence and analysis of chromosome 2 of the plant Arabidopsis thaliana.</title>
        <authorList>
            <person name="Lin X."/>
            <person name="Kaul S."/>
            <person name="Rounsley S.D."/>
            <person name="Shea T.P."/>
            <person name="Benito M.-I."/>
            <person name="Town C.D."/>
            <person name="Fujii C.Y."/>
            <person name="Mason T.M."/>
            <person name="Bowman C.L."/>
            <person name="Barnstead M.E."/>
            <person name="Feldblyum T.V."/>
            <person name="Buell C.R."/>
            <person name="Ketchum K.A."/>
            <person name="Lee J.J."/>
            <person name="Ronning C.M."/>
            <person name="Koo H.L."/>
            <person name="Moffat K.S."/>
            <person name="Cronin L.A."/>
            <person name="Shen M."/>
            <person name="Pai G."/>
            <person name="Van Aken S."/>
            <person name="Umayam L."/>
            <person name="Tallon L.J."/>
            <person name="Gill J.E."/>
            <person name="Adams M.D."/>
            <person name="Carrera A.J."/>
            <person name="Creasy T.H."/>
            <person name="Goodman H.M."/>
            <person name="Somerville C.R."/>
            <person name="Copenhaver G.P."/>
            <person name="Preuss D."/>
            <person name="Nierman W.C."/>
            <person name="White O."/>
            <person name="Eisen J.A."/>
            <person name="Salzberg S.L."/>
            <person name="Fraser C.M."/>
            <person name="Venter J.C."/>
        </authorList>
    </citation>
    <scope>NUCLEOTIDE SEQUENCE [LARGE SCALE GENOMIC DNA]</scope>
    <source>
        <strain>cv. Columbia</strain>
    </source>
</reference>
<reference key="2">
    <citation type="journal article" date="2017" name="Plant J.">
        <title>Araport11: a complete reannotation of the Arabidopsis thaliana reference genome.</title>
        <authorList>
            <person name="Cheng C.Y."/>
            <person name="Krishnakumar V."/>
            <person name="Chan A.P."/>
            <person name="Thibaud-Nissen F."/>
            <person name="Schobel S."/>
            <person name="Town C.D."/>
        </authorList>
    </citation>
    <scope>GENOME REANNOTATION</scope>
    <source>
        <strain>cv. Columbia</strain>
    </source>
</reference>
<reference key="3">
    <citation type="journal article" date="2003" name="Science">
        <title>Empirical analysis of transcriptional activity in the Arabidopsis genome.</title>
        <authorList>
            <person name="Yamada K."/>
            <person name="Lim J."/>
            <person name="Dale J.M."/>
            <person name="Chen H."/>
            <person name="Shinn P."/>
            <person name="Palm C.J."/>
            <person name="Southwick A.M."/>
            <person name="Wu H.C."/>
            <person name="Kim C.J."/>
            <person name="Nguyen M."/>
            <person name="Pham P.K."/>
            <person name="Cheuk R.F."/>
            <person name="Karlin-Newmann G."/>
            <person name="Liu S.X."/>
            <person name="Lam B."/>
            <person name="Sakano H."/>
            <person name="Wu T."/>
            <person name="Yu G."/>
            <person name="Miranda M."/>
            <person name="Quach H.L."/>
            <person name="Tripp M."/>
            <person name="Chang C.H."/>
            <person name="Lee J.M."/>
            <person name="Toriumi M.J."/>
            <person name="Chan M.M."/>
            <person name="Tang C.C."/>
            <person name="Onodera C.S."/>
            <person name="Deng J.M."/>
            <person name="Akiyama K."/>
            <person name="Ansari Y."/>
            <person name="Arakawa T."/>
            <person name="Banh J."/>
            <person name="Banno F."/>
            <person name="Bowser L."/>
            <person name="Brooks S.Y."/>
            <person name="Carninci P."/>
            <person name="Chao Q."/>
            <person name="Choy N."/>
            <person name="Enju A."/>
            <person name="Goldsmith A.D."/>
            <person name="Gurjal M."/>
            <person name="Hansen N.F."/>
            <person name="Hayashizaki Y."/>
            <person name="Johnson-Hopson C."/>
            <person name="Hsuan V.W."/>
            <person name="Iida K."/>
            <person name="Karnes M."/>
            <person name="Khan S."/>
            <person name="Koesema E."/>
            <person name="Ishida J."/>
            <person name="Jiang P.X."/>
            <person name="Jones T."/>
            <person name="Kawai J."/>
            <person name="Kamiya A."/>
            <person name="Meyers C."/>
            <person name="Nakajima M."/>
            <person name="Narusaka M."/>
            <person name="Seki M."/>
            <person name="Sakurai T."/>
            <person name="Satou M."/>
            <person name="Tamse R."/>
            <person name="Vaysberg M."/>
            <person name="Wallender E.K."/>
            <person name="Wong C."/>
            <person name="Yamamura Y."/>
            <person name="Yuan S."/>
            <person name="Shinozaki K."/>
            <person name="Davis R.W."/>
            <person name="Theologis A."/>
            <person name="Ecker J.R."/>
        </authorList>
    </citation>
    <scope>NUCLEOTIDE SEQUENCE [LARGE SCALE MRNA]</scope>
    <source>
        <strain>cv. Columbia</strain>
    </source>
</reference>
<reference key="4">
    <citation type="journal article" date="2009" name="Plant Physiol.">
        <title>Large-scale Arabidopsis phosphoproteome profiling reveals novel chloroplast kinase substrates and phosphorylation networks.</title>
        <authorList>
            <person name="Reiland S."/>
            <person name="Messerli G."/>
            <person name="Baerenfaller K."/>
            <person name="Gerrits B."/>
            <person name="Endler A."/>
            <person name="Grossmann J."/>
            <person name="Gruissem W."/>
            <person name="Baginsky S."/>
        </authorList>
    </citation>
    <scope>IDENTIFICATION BY MASS SPECTROMETRY [LARGE SCALE ANALYSIS]</scope>
</reference>
<reference key="5">
    <citation type="journal article" date="2012" name="Mol. Cell. Proteomics">
        <title>Comparative large-scale characterisation of plant vs. mammal proteins reveals similar and idiosyncratic N-alpha acetylation features.</title>
        <authorList>
            <person name="Bienvenut W.V."/>
            <person name="Sumpton D."/>
            <person name="Martinez A."/>
            <person name="Lilla S."/>
            <person name="Espagne C."/>
            <person name="Meinnel T."/>
            <person name="Giglione C."/>
        </authorList>
    </citation>
    <scope>ACETYLATION [LARGE SCALE ANALYSIS] AT ALA-2</scope>
    <scope>CLEAVAGE OF INITIATOR METHIONINE [LARGE SCALE ANALYSIS]</scope>
    <scope>IDENTIFICATION BY MASS SPECTROMETRY [LARGE SCALE ANALYSIS]</scope>
</reference>
<reference key="6">
    <citation type="journal article" date="2013" name="Plant Cell">
        <title>Light-regulated hypocotyl elongation involves proteasome-dependent degradation of the microtubule regulatory protein WDL3 in Arabidopsis.</title>
        <authorList>
            <person name="Liu X."/>
            <person name="Qin T."/>
            <person name="Ma Q."/>
            <person name="Sun J."/>
            <person name="Liu Z."/>
            <person name="Yuan M."/>
            <person name="Mao T."/>
        </authorList>
    </citation>
    <scope>TISSUE SPECIFICITY</scope>
</reference>
<proteinExistence type="evidence at protein level"/>
<keyword id="KW-0007">Acetylation</keyword>
<keyword id="KW-0963">Cytoplasm</keyword>
<keyword id="KW-0206">Cytoskeleton</keyword>
<keyword id="KW-0493">Microtubule</keyword>
<keyword id="KW-1185">Reference proteome</keyword>
<gene>
    <name evidence="4" type="primary">WDL4</name>
    <name evidence="6" type="ordered locus">At2g35880</name>
</gene>
<comment type="function">
    <text evidence="1">Microtubule-associated protein (MAP) that regulates the orientation of interphase cortical microtubules.</text>
</comment>
<comment type="subcellular location">
    <subcellularLocation>
        <location evidence="1">Cytoplasm</location>
        <location evidence="1">Cytoskeleton</location>
    </subcellularLocation>
</comment>
<comment type="tissue specificity">
    <text evidence="3">Expressed in seedlings.</text>
</comment>
<comment type="similarity">
    <text evidence="5">Belongs to the TPX2 family.</text>
</comment>
<evidence type="ECO:0000250" key="1">
    <source>
        <dbReference type="UniProtKB" id="Q8GYX9"/>
    </source>
</evidence>
<evidence type="ECO:0000256" key="2">
    <source>
        <dbReference type="SAM" id="MobiDB-lite"/>
    </source>
</evidence>
<evidence type="ECO:0000269" key="3">
    <source>
    </source>
</evidence>
<evidence type="ECO:0000303" key="4">
    <source>
    </source>
</evidence>
<evidence type="ECO:0000305" key="5"/>
<evidence type="ECO:0000312" key="6">
    <source>
        <dbReference type="Araport" id="AT2G35880"/>
    </source>
</evidence>
<evidence type="ECO:0007744" key="7">
    <source>
    </source>
</evidence>
<sequence length="432" mass="46697">MASEDLNIVAESKKGEENVIVDNSKDMNRPENLDLSTEKTDTANENGPKDEASKLVKEADLPESGTSVKSKTAKDNKPVKRKSGTFSRSPRFMSQSSSFPTKGAYTDITRKSIDATTSKTSLKPVVAGGSKPKATPSSSSGVSAKRTSLVSAPLKKQTMPVKTISKDAASGPTSKLGDEGSKSIKEETAGKDVEEAGSTTAVVADKVSNPLKAEMASKDDEDTRSTTTSTSTPRGRRSSVGSASGFSFRLEERAEKRKEFYMKLEEKIHAKEVEKTNLQAKSKESQEEEIKRLRKSLTFKAGPMPSFYKEPPPKVELKKIPTTRPKSPKLGRRKSSSDATGGEAAPRVTKPKDSSSSTVKKPITKSQPKLETQEKSVKAKEKKKKVKKEEAEKRGEEEKATAVAAKPEEQKPNSNNIQVKAEIMASEVVVGG</sequence>
<accession>Q9SJ62</accession>
<accession>Q93ZD3</accession>
<name>WDL4_ARATH</name>